<proteinExistence type="inferred from homology"/>
<dbReference type="EC" id="1.1.1.86" evidence="1"/>
<dbReference type="EMBL" id="CP000546">
    <property type="protein sequence ID" value="ABN03940.1"/>
    <property type="molecule type" value="Genomic_DNA"/>
</dbReference>
<dbReference type="RefSeq" id="WP_004185539.1">
    <property type="nucleotide sequence ID" value="NC_008836.1"/>
</dbReference>
<dbReference type="SMR" id="A2S472"/>
<dbReference type="GeneID" id="93059680"/>
<dbReference type="KEGG" id="bml:BMA10229_A0751"/>
<dbReference type="HOGENOM" id="CLU_033821_0_1_4"/>
<dbReference type="UniPathway" id="UPA00047">
    <property type="reaction ID" value="UER00056"/>
</dbReference>
<dbReference type="UniPathway" id="UPA00049">
    <property type="reaction ID" value="UER00060"/>
</dbReference>
<dbReference type="Proteomes" id="UP000002283">
    <property type="component" value="Chromosome I"/>
</dbReference>
<dbReference type="GO" id="GO:0005829">
    <property type="term" value="C:cytosol"/>
    <property type="evidence" value="ECO:0007669"/>
    <property type="project" value="TreeGrafter"/>
</dbReference>
<dbReference type="GO" id="GO:0004455">
    <property type="term" value="F:ketol-acid reductoisomerase activity"/>
    <property type="evidence" value="ECO:0007669"/>
    <property type="project" value="UniProtKB-UniRule"/>
</dbReference>
<dbReference type="GO" id="GO:0000287">
    <property type="term" value="F:magnesium ion binding"/>
    <property type="evidence" value="ECO:0007669"/>
    <property type="project" value="UniProtKB-UniRule"/>
</dbReference>
<dbReference type="GO" id="GO:0050661">
    <property type="term" value="F:NADP binding"/>
    <property type="evidence" value="ECO:0007669"/>
    <property type="project" value="InterPro"/>
</dbReference>
<dbReference type="GO" id="GO:0009097">
    <property type="term" value="P:isoleucine biosynthetic process"/>
    <property type="evidence" value="ECO:0007669"/>
    <property type="project" value="UniProtKB-UniRule"/>
</dbReference>
<dbReference type="GO" id="GO:0009099">
    <property type="term" value="P:L-valine biosynthetic process"/>
    <property type="evidence" value="ECO:0007669"/>
    <property type="project" value="UniProtKB-UniRule"/>
</dbReference>
<dbReference type="FunFam" id="3.40.50.720:FF:000023">
    <property type="entry name" value="Ketol-acid reductoisomerase (NADP(+))"/>
    <property type="match status" value="1"/>
</dbReference>
<dbReference type="Gene3D" id="6.10.240.10">
    <property type="match status" value="1"/>
</dbReference>
<dbReference type="Gene3D" id="3.40.50.720">
    <property type="entry name" value="NAD(P)-binding Rossmann-like Domain"/>
    <property type="match status" value="1"/>
</dbReference>
<dbReference type="HAMAP" id="MF_00435">
    <property type="entry name" value="IlvC"/>
    <property type="match status" value="1"/>
</dbReference>
<dbReference type="InterPro" id="IPR008927">
    <property type="entry name" value="6-PGluconate_DH-like_C_sf"/>
</dbReference>
<dbReference type="InterPro" id="IPR013023">
    <property type="entry name" value="KARI"/>
</dbReference>
<dbReference type="InterPro" id="IPR000506">
    <property type="entry name" value="KARI_C"/>
</dbReference>
<dbReference type="InterPro" id="IPR013116">
    <property type="entry name" value="KARI_N"/>
</dbReference>
<dbReference type="InterPro" id="IPR014359">
    <property type="entry name" value="KARI_prok"/>
</dbReference>
<dbReference type="InterPro" id="IPR036291">
    <property type="entry name" value="NAD(P)-bd_dom_sf"/>
</dbReference>
<dbReference type="NCBIfam" id="TIGR00465">
    <property type="entry name" value="ilvC"/>
    <property type="match status" value="1"/>
</dbReference>
<dbReference type="NCBIfam" id="NF004017">
    <property type="entry name" value="PRK05479.1"/>
    <property type="match status" value="1"/>
</dbReference>
<dbReference type="NCBIfam" id="NF009940">
    <property type="entry name" value="PRK13403.1"/>
    <property type="match status" value="1"/>
</dbReference>
<dbReference type="PANTHER" id="PTHR21371">
    <property type="entry name" value="KETOL-ACID REDUCTOISOMERASE, MITOCHONDRIAL"/>
    <property type="match status" value="1"/>
</dbReference>
<dbReference type="PANTHER" id="PTHR21371:SF1">
    <property type="entry name" value="KETOL-ACID REDUCTOISOMERASE, MITOCHONDRIAL"/>
    <property type="match status" value="1"/>
</dbReference>
<dbReference type="Pfam" id="PF01450">
    <property type="entry name" value="KARI_C"/>
    <property type="match status" value="1"/>
</dbReference>
<dbReference type="Pfam" id="PF07991">
    <property type="entry name" value="KARI_N"/>
    <property type="match status" value="1"/>
</dbReference>
<dbReference type="PIRSF" id="PIRSF000116">
    <property type="entry name" value="IlvC_gammaproteo"/>
    <property type="match status" value="1"/>
</dbReference>
<dbReference type="SUPFAM" id="SSF48179">
    <property type="entry name" value="6-phosphogluconate dehydrogenase C-terminal domain-like"/>
    <property type="match status" value="1"/>
</dbReference>
<dbReference type="SUPFAM" id="SSF51735">
    <property type="entry name" value="NAD(P)-binding Rossmann-fold domains"/>
    <property type="match status" value="1"/>
</dbReference>
<dbReference type="PROSITE" id="PS51851">
    <property type="entry name" value="KARI_C"/>
    <property type="match status" value="1"/>
</dbReference>
<dbReference type="PROSITE" id="PS51850">
    <property type="entry name" value="KARI_N"/>
    <property type="match status" value="1"/>
</dbReference>
<keyword id="KW-0028">Amino-acid biosynthesis</keyword>
<keyword id="KW-0100">Branched-chain amino acid biosynthesis</keyword>
<keyword id="KW-0460">Magnesium</keyword>
<keyword id="KW-0479">Metal-binding</keyword>
<keyword id="KW-0521">NADP</keyword>
<keyword id="KW-0560">Oxidoreductase</keyword>
<reference key="1">
    <citation type="journal article" date="2010" name="Genome Biol. Evol.">
        <title>Continuing evolution of Burkholderia mallei through genome reduction and large-scale rearrangements.</title>
        <authorList>
            <person name="Losada L."/>
            <person name="Ronning C.M."/>
            <person name="DeShazer D."/>
            <person name="Woods D."/>
            <person name="Fedorova N."/>
            <person name="Kim H.S."/>
            <person name="Shabalina S.A."/>
            <person name="Pearson T.R."/>
            <person name="Brinkac L."/>
            <person name="Tan P."/>
            <person name="Nandi T."/>
            <person name="Crabtree J."/>
            <person name="Badger J."/>
            <person name="Beckstrom-Sternberg S."/>
            <person name="Saqib M."/>
            <person name="Schutzer S.E."/>
            <person name="Keim P."/>
            <person name="Nierman W.C."/>
        </authorList>
    </citation>
    <scope>NUCLEOTIDE SEQUENCE [LARGE SCALE GENOMIC DNA]</scope>
    <source>
        <strain>NCTC 10229</strain>
    </source>
</reference>
<accession>A2S472</accession>
<evidence type="ECO:0000255" key="1">
    <source>
        <dbReference type="HAMAP-Rule" id="MF_00435"/>
    </source>
</evidence>
<evidence type="ECO:0000255" key="2">
    <source>
        <dbReference type="PROSITE-ProRule" id="PRU01197"/>
    </source>
</evidence>
<evidence type="ECO:0000255" key="3">
    <source>
        <dbReference type="PROSITE-ProRule" id="PRU01198"/>
    </source>
</evidence>
<protein>
    <recommendedName>
        <fullName evidence="1">Ketol-acid reductoisomerase (NADP(+))</fullName>
        <shortName evidence="1">KARI</shortName>
        <ecNumber evidence="1">1.1.1.86</ecNumber>
    </recommendedName>
    <alternativeName>
        <fullName evidence="1">Acetohydroxy-acid isomeroreductase</fullName>
        <shortName evidence="1">AHIR</shortName>
    </alternativeName>
    <alternativeName>
        <fullName evidence="1">Alpha-keto-beta-hydroxylacyl reductoisomerase</fullName>
    </alternativeName>
    <alternativeName>
        <fullName evidence="1">Ketol-acid reductoisomerase type 1</fullName>
    </alternativeName>
    <alternativeName>
        <fullName evidence="1">Ketol-acid reductoisomerase type I</fullName>
    </alternativeName>
</protein>
<gene>
    <name evidence="1" type="primary">ilvC</name>
    <name type="ordered locus">BMA10229_A0751</name>
</gene>
<comment type="function">
    <text evidence="1">Involved in the biosynthesis of branched-chain amino acids (BCAA). Catalyzes an alkyl-migration followed by a ketol-acid reduction of (S)-2-acetolactate (S2AL) to yield (R)-2,3-dihydroxy-isovalerate. In the isomerase reaction, S2AL is rearranged via a Mg-dependent methyl migration to produce 3-hydroxy-3-methyl-2-ketobutyrate (HMKB). In the reductase reaction, this 2-ketoacid undergoes a metal-dependent reduction by NADPH to yield (R)-2,3-dihydroxy-isovalerate.</text>
</comment>
<comment type="catalytic activity">
    <reaction evidence="1">
        <text>(2R)-2,3-dihydroxy-3-methylbutanoate + NADP(+) = (2S)-2-acetolactate + NADPH + H(+)</text>
        <dbReference type="Rhea" id="RHEA:22068"/>
        <dbReference type="ChEBI" id="CHEBI:15378"/>
        <dbReference type="ChEBI" id="CHEBI:49072"/>
        <dbReference type="ChEBI" id="CHEBI:57783"/>
        <dbReference type="ChEBI" id="CHEBI:58349"/>
        <dbReference type="ChEBI" id="CHEBI:58476"/>
        <dbReference type="EC" id="1.1.1.86"/>
    </reaction>
</comment>
<comment type="catalytic activity">
    <reaction evidence="1">
        <text>(2R,3R)-2,3-dihydroxy-3-methylpentanoate + NADP(+) = (S)-2-ethyl-2-hydroxy-3-oxobutanoate + NADPH + H(+)</text>
        <dbReference type="Rhea" id="RHEA:13493"/>
        <dbReference type="ChEBI" id="CHEBI:15378"/>
        <dbReference type="ChEBI" id="CHEBI:49256"/>
        <dbReference type="ChEBI" id="CHEBI:49258"/>
        <dbReference type="ChEBI" id="CHEBI:57783"/>
        <dbReference type="ChEBI" id="CHEBI:58349"/>
        <dbReference type="EC" id="1.1.1.86"/>
    </reaction>
</comment>
<comment type="cofactor">
    <cofactor evidence="1">
        <name>Mg(2+)</name>
        <dbReference type="ChEBI" id="CHEBI:18420"/>
    </cofactor>
    <text evidence="1">Binds 2 magnesium ions per subunit.</text>
</comment>
<comment type="pathway">
    <text evidence="1">Amino-acid biosynthesis; L-isoleucine biosynthesis; L-isoleucine from 2-oxobutanoate: step 2/4.</text>
</comment>
<comment type="pathway">
    <text evidence="1">Amino-acid biosynthesis; L-valine biosynthesis; L-valine from pyruvate: step 2/4.</text>
</comment>
<comment type="similarity">
    <text evidence="1">Belongs to the ketol-acid reductoisomerase family.</text>
</comment>
<name>ILVC_BURM9</name>
<sequence>MKVFYDKDADLSLIKGKQVTIIGYGSQGHAHALNLKDSGVNVTVGLRRGGASWSKAENAGLAVKEVAEAVKGADVVMMLLPDEQIAAVYAQEVHANIKEGAALAFAHGFNVHYGQVIPRADLDVIMVAPKAPGHTVRGTYAQGGGVPHLIAVAQDKSGAARDIALSYAAANGGGRAGIIETNFREETETDLFGEQAVLCGGTVELIKAGFETLVEAGYAPEMAYFECLHELKLIVDLIYEGGIANMNYSISNNAEYGEYVTGPRVVTEETKKAMKQCLTDIQTGEYAKSFILENKAGAPTLQSRRRLTAEHQIEQVGSKLRAMMPWIAKNKLVDQSKN</sequence>
<organism>
    <name type="scientific">Burkholderia mallei (strain NCTC 10229)</name>
    <dbReference type="NCBI Taxonomy" id="412022"/>
    <lineage>
        <taxon>Bacteria</taxon>
        <taxon>Pseudomonadati</taxon>
        <taxon>Pseudomonadota</taxon>
        <taxon>Betaproteobacteria</taxon>
        <taxon>Burkholderiales</taxon>
        <taxon>Burkholderiaceae</taxon>
        <taxon>Burkholderia</taxon>
        <taxon>pseudomallei group</taxon>
    </lineage>
</organism>
<feature type="chain" id="PRO_1000050487" description="Ketol-acid reductoisomerase (NADP(+))">
    <location>
        <begin position="1"/>
        <end position="338"/>
    </location>
</feature>
<feature type="domain" description="KARI N-terminal Rossmann" evidence="2">
    <location>
        <begin position="1"/>
        <end position="181"/>
    </location>
</feature>
<feature type="domain" description="KARI C-terminal knotted" evidence="3">
    <location>
        <begin position="182"/>
        <end position="327"/>
    </location>
</feature>
<feature type="active site" evidence="1">
    <location>
        <position position="107"/>
    </location>
</feature>
<feature type="binding site" evidence="1">
    <location>
        <begin position="24"/>
        <end position="27"/>
    </location>
    <ligand>
        <name>NADP(+)</name>
        <dbReference type="ChEBI" id="CHEBI:58349"/>
    </ligand>
</feature>
<feature type="binding site" evidence="1">
    <location>
        <position position="47"/>
    </location>
    <ligand>
        <name>NADP(+)</name>
        <dbReference type="ChEBI" id="CHEBI:58349"/>
    </ligand>
</feature>
<feature type="binding site" evidence="1">
    <location>
        <position position="52"/>
    </location>
    <ligand>
        <name>NADP(+)</name>
        <dbReference type="ChEBI" id="CHEBI:58349"/>
    </ligand>
</feature>
<feature type="binding site" evidence="1">
    <location>
        <position position="133"/>
    </location>
    <ligand>
        <name>NADP(+)</name>
        <dbReference type="ChEBI" id="CHEBI:58349"/>
    </ligand>
</feature>
<feature type="binding site" evidence="1">
    <location>
        <position position="190"/>
    </location>
    <ligand>
        <name>Mg(2+)</name>
        <dbReference type="ChEBI" id="CHEBI:18420"/>
        <label>1</label>
    </ligand>
</feature>
<feature type="binding site" evidence="1">
    <location>
        <position position="190"/>
    </location>
    <ligand>
        <name>Mg(2+)</name>
        <dbReference type="ChEBI" id="CHEBI:18420"/>
        <label>2</label>
    </ligand>
</feature>
<feature type="binding site" evidence="1">
    <location>
        <position position="194"/>
    </location>
    <ligand>
        <name>Mg(2+)</name>
        <dbReference type="ChEBI" id="CHEBI:18420"/>
        <label>1</label>
    </ligand>
</feature>
<feature type="binding site" evidence="1">
    <location>
        <position position="226"/>
    </location>
    <ligand>
        <name>Mg(2+)</name>
        <dbReference type="ChEBI" id="CHEBI:18420"/>
        <label>2</label>
    </ligand>
</feature>
<feature type="binding site" evidence="1">
    <location>
        <position position="230"/>
    </location>
    <ligand>
        <name>Mg(2+)</name>
        <dbReference type="ChEBI" id="CHEBI:18420"/>
        <label>2</label>
    </ligand>
</feature>
<feature type="binding site" evidence="1">
    <location>
        <position position="251"/>
    </location>
    <ligand>
        <name>substrate</name>
    </ligand>
</feature>